<name>RSGA_BORBZ</name>
<keyword id="KW-0963">Cytoplasm</keyword>
<keyword id="KW-0342">GTP-binding</keyword>
<keyword id="KW-0378">Hydrolase</keyword>
<keyword id="KW-0479">Metal-binding</keyword>
<keyword id="KW-0547">Nucleotide-binding</keyword>
<keyword id="KW-0690">Ribosome biogenesis</keyword>
<keyword id="KW-0694">RNA-binding</keyword>
<keyword id="KW-0699">rRNA-binding</keyword>
<keyword id="KW-0862">Zinc</keyword>
<feature type="chain" id="PRO_1000188037" description="Small ribosomal subunit biogenesis GTPase RsgA">
    <location>
        <begin position="1"/>
        <end position="307"/>
    </location>
</feature>
<feature type="domain" description="CP-type G" evidence="2">
    <location>
        <begin position="80"/>
        <end position="237"/>
    </location>
</feature>
<feature type="binding site" evidence="1">
    <location>
        <begin position="129"/>
        <end position="132"/>
    </location>
    <ligand>
        <name>GTP</name>
        <dbReference type="ChEBI" id="CHEBI:37565"/>
    </ligand>
</feature>
<feature type="binding site" evidence="1">
    <location>
        <begin position="180"/>
        <end position="188"/>
    </location>
    <ligand>
        <name>GTP</name>
        <dbReference type="ChEBI" id="CHEBI:37565"/>
    </ligand>
</feature>
<feature type="binding site" evidence="1">
    <location>
        <position position="261"/>
    </location>
    <ligand>
        <name>Zn(2+)</name>
        <dbReference type="ChEBI" id="CHEBI:29105"/>
    </ligand>
</feature>
<feature type="binding site" evidence="1">
    <location>
        <position position="266"/>
    </location>
    <ligand>
        <name>Zn(2+)</name>
        <dbReference type="ChEBI" id="CHEBI:29105"/>
    </ligand>
</feature>
<feature type="binding site" evidence="1">
    <location>
        <position position="268"/>
    </location>
    <ligand>
        <name>Zn(2+)</name>
        <dbReference type="ChEBI" id="CHEBI:29105"/>
    </ligand>
</feature>
<feature type="binding site" evidence="1">
    <location>
        <position position="274"/>
    </location>
    <ligand>
        <name>Zn(2+)</name>
        <dbReference type="ChEBI" id="CHEBI:29105"/>
    </ligand>
</feature>
<gene>
    <name evidence="1" type="primary">rsgA</name>
    <name type="ordered locus">BbuZS7_0099</name>
</gene>
<proteinExistence type="inferred from homology"/>
<reference key="1">
    <citation type="journal article" date="2011" name="J. Bacteriol.">
        <title>Whole-genome sequences of thirteen isolates of Borrelia burgdorferi.</title>
        <authorList>
            <person name="Schutzer S.E."/>
            <person name="Fraser-Liggett C.M."/>
            <person name="Casjens S.R."/>
            <person name="Qiu W.G."/>
            <person name="Dunn J.J."/>
            <person name="Mongodin E.F."/>
            <person name="Luft B.J."/>
        </authorList>
    </citation>
    <scope>NUCLEOTIDE SEQUENCE [LARGE SCALE GENOMIC DNA]</scope>
    <source>
        <strain>ZS7</strain>
    </source>
</reference>
<organism>
    <name type="scientific">Borreliella burgdorferi (strain ZS7)</name>
    <name type="common">Borrelia burgdorferi</name>
    <dbReference type="NCBI Taxonomy" id="445985"/>
    <lineage>
        <taxon>Bacteria</taxon>
        <taxon>Pseudomonadati</taxon>
        <taxon>Spirochaetota</taxon>
        <taxon>Spirochaetia</taxon>
        <taxon>Spirochaetales</taxon>
        <taxon>Borreliaceae</taxon>
        <taxon>Borreliella</taxon>
    </lineage>
</organism>
<protein>
    <recommendedName>
        <fullName evidence="1">Small ribosomal subunit biogenesis GTPase RsgA</fullName>
        <ecNumber evidence="1">3.6.1.-</ecNumber>
    </recommendedName>
</protein>
<accession>B7J132</accession>
<dbReference type="EC" id="3.6.1.-" evidence="1"/>
<dbReference type="EMBL" id="CP001205">
    <property type="protein sequence ID" value="ACK75199.1"/>
    <property type="molecule type" value="Genomic_DNA"/>
</dbReference>
<dbReference type="RefSeq" id="WP_002556701.1">
    <property type="nucleotide sequence ID" value="NC_011728.1"/>
</dbReference>
<dbReference type="SMR" id="B7J132"/>
<dbReference type="GeneID" id="56568119"/>
<dbReference type="KEGG" id="bbz:BbuZS7_0099"/>
<dbReference type="HOGENOM" id="CLU_033617_2_1_12"/>
<dbReference type="Proteomes" id="UP000006901">
    <property type="component" value="Chromosome"/>
</dbReference>
<dbReference type="GO" id="GO:0005737">
    <property type="term" value="C:cytoplasm"/>
    <property type="evidence" value="ECO:0007669"/>
    <property type="project" value="UniProtKB-SubCell"/>
</dbReference>
<dbReference type="GO" id="GO:0005525">
    <property type="term" value="F:GTP binding"/>
    <property type="evidence" value="ECO:0007669"/>
    <property type="project" value="UniProtKB-UniRule"/>
</dbReference>
<dbReference type="GO" id="GO:0003924">
    <property type="term" value="F:GTPase activity"/>
    <property type="evidence" value="ECO:0007669"/>
    <property type="project" value="UniProtKB-UniRule"/>
</dbReference>
<dbReference type="GO" id="GO:0046872">
    <property type="term" value="F:metal ion binding"/>
    <property type="evidence" value="ECO:0007669"/>
    <property type="project" value="UniProtKB-KW"/>
</dbReference>
<dbReference type="GO" id="GO:0019843">
    <property type="term" value="F:rRNA binding"/>
    <property type="evidence" value="ECO:0007669"/>
    <property type="project" value="UniProtKB-KW"/>
</dbReference>
<dbReference type="GO" id="GO:0042274">
    <property type="term" value="P:ribosomal small subunit biogenesis"/>
    <property type="evidence" value="ECO:0007669"/>
    <property type="project" value="UniProtKB-UniRule"/>
</dbReference>
<dbReference type="CDD" id="cd01854">
    <property type="entry name" value="YjeQ_EngC"/>
    <property type="match status" value="1"/>
</dbReference>
<dbReference type="Gene3D" id="3.40.50.300">
    <property type="entry name" value="P-loop containing nucleotide triphosphate hydrolases"/>
    <property type="match status" value="1"/>
</dbReference>
<dbReference type="Gene3D" id="1.10.40.50">
    <property type="entry name" value="Probable gtpase engc, domain 3"/>
    <property type="match status" value="1"/>
</dbReference>
<dbReference type="HAMAP" id="MF_01820">
    <property type="entry name" value="GTPase_RsgA"/>
    <property type="match status" value="1"/>
</dbReference>
<dbReference type="InterPro" id="IPR030378">
    <property type="entry name" value="G_CP_dom"/>
</dbReference>
<dbReference type="InterPro" id="IPR027417">
    <property type="entry name" value="P-loop_NTPase"/>
</dbReference>
<dbReference type="InterPro" id="IPR004881">
    <property type="entry name" value="Ribosome_biogen_GTPase_RsgA"/>
</dbReference>
<dbReference type="InterPro" id="IPR010914">
    <property type="entry name" value="RsgA_GTPase_dom"/>
</dbReference>
<dbReference type="NCBIfam" id="TIGR00157">
    <property type="entry name" value="ribosome small subunit-dependent GTPase A"/>
    <property type="match status" value="1"/>
</dbReference>
<dbReference type="PANTHER" id="PTHR32120">
    <property type="entry name" value="SMALL RIBOSOMAL SUBUNIT BIOGENESIS GTPASE RSGA"/>
    <property type="match status" value="1"/>
</dbReference>
<dbReference type="PANTHER" id="PTHR32120:SF11">
    <property type="entry name" value="SMALL RIBOSOMAL SUBUNIT BIOGENESIS GTPASE RSGA 1, MITOCHONDRIAL-RELATED"/>
    <property type="match status" value="1"/>
</dbReference>
<dbReference type="Pfam" id="PF03193">
    <property type="entry name" value="RsgA_GTPase"/>
    <property type="match status" value="1"/>
</dbReference>
<dbReference type="SUPFAM" id="SSF52540">
    <property type="entry name" value="P-loop containing nucleoside triphosphate hydrolases"/>
    <property type="match status" value="1"/>
</dbReference>
<dbReference type="PROSITE" id="PS50936">
    <property type="entry name" value="ENGC_GTPASE"/>
    <property type="match status" value="1"/>
</dbReference>
<dbReference type="PROSITE" id="PS51721">
    <property type="entry name" value="G_CP"/>
    <property type="match status" value="1"/>
</dbReference>
<comment type="function">
    <text evidence="1">One of several proteins that assist in the late maturation steps of the functional core of the 30S ribosomal subunit. Helps release RbfA from mature subunits. May play a role in the assembly of ribosomal proteins into the subunit. Circularly permuted GTPase that catalyzes slow GTP hydrolysis, GTPase activity is stimulated by the 30S ribosomal subunit.</text>
</comment>
<comment type="cofactor">
    <cofactor evidence="1">
        <name>Zn(2+)</name>
        <dbReference type="ChEBI" id="CHEBI:29105"/>
    </cofactor>
    <text evidence="1">Binds 1 zinc ion per subunit.</text>
</comment>
<comment type="subunit">
    <text evidence="1">Monomer. Associates with 30S ribosomal subunit, binds 16S rRNA.</text>
</comment>
<comment type="subcellular location">
    <subcellularLocation>
        <location evidence="1">Cytoplasm</location>
    </subcellularLocation>
</comment>
<comment type="similarity">
    <text evidence="1">Belongs to the TRAFAC class YlqF/YawG GTPase family. RsgA subfamily.</text>
</comment>
<evidence type="ECO:0000255" key="1">
    <source>
        <dbReference type="HAMAP-Rule" id="MF_01820"/>
    </source>
</evidence>
<evidence type="ECO:0000255" key="2">
    <source>
        <dbReference type="PROSITE-ProRule" id="PRU01058"/>
    </source>
</evidence>
<sequence length="307" mass="35257">MNYLEFEVIWGVNNIYSILELNSKLIYEGIFKGKVLETGCKEYSPLVPGDIVLGYIYSSRKVYIDKRLSRKNILWRYNKKADLRQTIVSNIDNVLIVSSANFPEMKNFFIDRVLIVAEEQNIVPIIVINKIDKGISQKAQEFSEIYENLGYKVLKTSVKTYEGIKEVKEVLKNSRTSFIGQSGVGKSSLINLIDSRASQSVNEISHKYSRGKHTTVYSISFHSDSGIIVDTPGIKEFGIETLPFENLKYYFKEFENFASFCKYKSCLHVSEPYCSVTSSLDNGISKLRYESYLKILSELKNYKNYAR</sequence>